<protein>
    <recommendedName>
        <fullName evidence="1">Orotidine 5'-phosphate decarboxylase</fullName>
        <ecNumber evidence="1">4.1.1.23</ecNumber>
    </recommendedName>
    <alternativeName>
        <fullName evidence="1">OMP decarboxylase</fullName>
        <shortName evidence="1">OMPDCase</shortName>
        <shortName evidence="1">OMPdecase</shortName>
    </alternativeName>
</protein>
<accession>Q5PD06</accession>
<keyword id="KW-0210">Decarboxylase</keyword>
<keyword id="KW-0456">Lyase</keyword>
<keyword id="KW-0665">Pyrimidine biosynthesis</keyword>
<sequence length="245" mass="26345">MTFTASSSSCAITESPVVVALDYHERDKALAFVDKIDPRDCRLKVGKEMFTLFGPQLVRDLQQRGFDVFLDLKFHDIPNTTARAVAAAADLGVWMVNVHASGGARMMAAARDALAPFGKDAPLLIAVTVLTSMETSDLRDLGVTLSPAEHAERLARLTQQCGLDGVVCSAQEAVRFKQVFGAAFKLVTPGIRPAGSEAGDQRRIMTPEQALSAGVDYMVIGRPVTQSVDPAQTLKDINASLKREA</sequence>
<comment type="function">
    <text evidence="1">Catalyzes the decarboxylation of orotidine 5'-monophosphate (OMP) to uridine 5'-monophosphate (UMP).</text>
</comment>
<comment type="catalytic activity">
    <reaction evidence="1">
        <text>orotidine 5'-phosphate + H(+) = UMP + CO2</text>
        <dbReference type="Rhea" id="RHEA:11596"/>
        <dbReference type="ChEBI" id="CHEBI:15378"/>
        <dbReference type="ChEBI" id="CHEBI:16526"/>
        <dbReference type="ChEBI" id="CHEBI:57538"/>
        <dbReference type="ChEBI" id="CHEBI:57865"/>
        <dbReference type="EC" id="4.1.1.23"/>
    </reaction>
</comment>
<comment type="pathway">
    <text evidence="1">Pyrimidine metabolism; UMP biosynthesis via de novo pathway; UMP from orotate: step 2/2.</text>
</comment>
<comment type="subunit">
    <text evidence="1">Homodimer.</text>
</comment>
<comment type="similarity">
    <text evidence="1">Belongs to the OMP decarboxylase family. Type 1 subfamily.</text>
</comment>
<organism>
    <name type="scientific">Salmonella paratyphi A (strain ATCC 9150 / SARB42)</name>
    <dbReference type="NCBI Taxonomy" id="295319"/>
    <lineage>
        <taxon>Bacteria</taxon>
        <taxon>Pseudomonadati</taxon>
        <taxon>Pseudomonadota</taxon>
        <taxon>Gammaproteobacteria</taxon>
        <taxon>Enterobacterales</taxon>
        <taxon>Enterobacteriaceae</taxon>
        <taxon>Salmonella</taxon>
    </lineage>
</organism>
<feature type="chain" id="PRO_0000241904" description="Orotidine 5'-phosphate decarboxylase">
    <location>
        <begin position="1"/>
        <end position="245"/>
    </location>
</feature>
<feature type="active site" description="Proton donor" evidence="1">
    <location>
        <position position="73"/>
    </location>
</feature>
<feature type="binding site" evidence="1">
    <location>
        <position position="22"/>
    </location>
    <ligand>
        <name>substrate</name>
    </ligand>
</feature>
<feature type="binding site" evidence="1">
    <location>
        <position position="44"/>
    </location>
    <ligand>
        <name>substrate</name>
    </ligand>
</feature>
<feature type="binding site" evidence="1">
    <location>
        <begin position="71"/>
        <end position="80"/>
    </location>
    <ligand>
        <name>substrate</name>
    </ligand>
</feature>
<feature type="binding site" evidence="1">
    <location>
        <position position="131"/>
    </location>
    <ligand>
        <name>substrate</name>
    </ligand>
</feature>
<feature type="binding site" evidence="1">
    <location>
        <position position="192"/>
    </location>
    <ligand>
        <name>substrate</name>
    </ligand>
</feature>
<feature type="binding site" evidence="1">
    <location>
        <position position="201"/>
    </location>
    <ligand>
        <name>substrate</name>
    </ligand>
</feature>
<feature type="binding site" evidence="1">
    <location>
        <position position="221"/>
    </location>
    <ligand>
        <name>substrate</name>
    </ligand>
</feature>
<feature type="binding site" evidence="1">
    <location>
        <position position="222"/>
    </location>
    <ligand>
        <name>substrate</name>
    </ligand>
</feature>
<proteinExistence type="inferred from homology"/>
<name>PYRF_SALPA</name>
<gene>
    <name evidence="1" type="primary">pyrF</name>
    <name type="ordered locus">SPA1169</name>
</gene>
<dbReference type="EC" id="4.1.1.23" evidence="1"/>
<dbReference type="EMBL" id="CP000026">
    <property type="protein sequence ID" value="AAV77130.1"/>
    <property type="molecule type" value="Genomic_DNA"/>
</dbReference>
<dbReference type="RefSeq" id="WP_001529407.1">
    <property type="nucleotide sequence ID" value="NC_006511.1"/>
</dbReference>
<dbReference type="SMR" id="Q5PD06"/>
<dbReference type="KEGG" id="spt:SPA1169"/>
<dbReference type="HOGENOM" id="CLU_067069_0_0_6"/>
<dbReference type="UniPathway" id="UPA00070">
    <property type="reaction ID" value="UER00120"/>
</dbReference>
<dbReference type="Proteomes" id="UP000008185">
    <property type="component" value="Chromosome"/>
</dbReference>
<dbReference type="GO" id="GO:0005829">
    <property type="term" value="C:cytosol"/>
    <property type="evidence" value="ECO:0007669"/>
    <property type="project" value="TreeGrafter"/>
</dbReference>
<dbReference type="GO" id="GO:0004590">
    <property type="term" value="F:orotidine-5'-phosphate decarboxylase activity"/>
    <property type="evidence" value="ECO:0007669"/>
    <property type="project" value="UniProtKB-UniRule"/>
</dbReference>
<dbReference type="GO" id="GO:0006207">
    <property type="term" value="P:'de novo' pyrimidine nucleobase biosynthetic process"/>
    <property type="evidence" value="ECO:0007669"/>
    <property type="project" value="InterPro"/>
</dbReference>
<dbReference type="GO" id="GO:0044205">
    <property type="term" value="P:'de novo' UMP biosynthetic process"/>
    <property type="evidence" value="ECO:0007669"/>
    <property type="project" value="UniProtKB-UniRule"/>
</dbReference>
<dbReference type="CDD" id="cd04725">
    <property type="entry name" value="OMP_decarboxylase_like"/>
    <property type="match status" value="1"/>
</dbReference>
<dbReference type="FunFam" id="3.20.20.70:FF:000015">
    <property type="entry name" value="Orotidine 5'-phosphate decarboxylase"/>
    <property type="match status" value="1"/>
</dbReference>
<dbReference type="Gene3D" id="3.20.20.70">
    <property type="entry name" value="Aldolase class I"/>
    <property type="match status" value="1"/>
</dbReference>
<dbReference type="HAMAP" id="MF_01200_B">
    <property type="entry name" value="OMPdecase_type1_B"/>
    <property type="match status" value="1"/>
</dbReference>
<dbReference type="InterPro" id="IPR013785">
    <property type="entry name" value="Aldolase_TIM"/>
</dbReference>
<dbReference type="InterPro" id="IPR014732">
    <property type="entry name" value="OMPdecase"/>
</dbReference>
<dbReference type="InterPro" id="IPR018089">
    <property type="entry name" value="OMPdecase_AS"/>
</dbReference>
<dbReference type="InterPro" id="IPR047596">
    <property type="entry name" value="OMPdecase_bac"/>
</dbReference>
<dbReference type="InterPro" id="IPR001754">
    <property type="entry name" value="OMPdeCOase_dom"/>
</dbReference>
<dbReference type="InterPro" id="IPR011060">
    <property type="entry name" value="RibuloseP-bd_barrel"/>
</dbReference>
<dbReference type="NCBIfam" id="NF001273">
    <property type="entry name" value="PRK00230.1"/>
    <property type="match status" value="1"/>
</dbReference>
<dbReference type="NCBIfam" id="TIGR01740">
    <property type="entry name" value="pyrF"/>
    <property type="match status" value="1"/>
</dbReference>
<dbReference type="PANTHER" id="PTHR32119">
    <property type="entry name" value="OROTIDINE 5'-PHOSPHATE DECARBOXYLASE"/>
    <property type="match status" value="1"/>
</dbReference>
<dbReference type="PANTHER" id="PTHR32119:SF2">
    <property type="entry name" value="OROTIDINE 5'-PHOSPHATE DECARBOXYLASE"/>
    <property type="match status" value="1"/>
</dbReference>
<dbReference type="Pfam" id="PF00215">
    <property type="entry name" value="OMPdecase"/>
    <property type="match status" value="1"/>
</dbReference>
<dbReference type="SMART" id="SM00934">
    <property type="entry name" value="OMPdecase"/>
    <property type="match status" value="1"/>
</dbReference>
<dbReference type="SUPFAM" id="SSF51366">
    <property type="entry name" value="Ribulose-phoshate binding barrel"/>
    <property type="match status" value="1"/>
</dbReference>
<dbReference type="PROSITE" id="PS00156">
    <property type="entry name" value="OMPDECASE"/>
    <property type="match status" value="1"/>
</dbReference>
<evidence type="ECO:0000255" key="1">
    <source>
        <dbReference type="HAMAP-Rule" id="MF_01200"/>
    </source>
</evidence>
<reference key="1">
    <citation type="journal article" date="2004" name="Nat. Genet.">
        <title>Comparison of genome degradation in Paratyphi A and Typhi, human-restricted serovars of Salmonella enterica that cause typhoid.</title>
        <authorList>
            <person name="McClelland M."/>
            <person name="Sanderson K.E."/>
            <person name="Clifton S.W."/>
            <person name="Latreille P."/>
            <person name="Porwollik S."/>
            <person name="Sabo A."/>
            <person name="Meyer R."/>
            <person name="Bieri T."/>
            <person name="Ozersky P."/>
            <person name="McLellan M."/>
            <person name="Harkins C.R."/>
            <person name="Wang C."/>
            <person name="Nguyen C."/>
            <person name="Berghoff A."/>
            <person name="Elliott G."/>
            <person name="Kohlberg S."/>
            <person name="Strong C."/>
            <person name="Du F."/>
            <person name="Carter J."/>
            <person name="Kremizki C."/>
            <person name="Layman D."/>
            <person name="Leonard S."/>
            <person name="Sun H."/>
            <person name="Fulton L."/>
            <person name="Nash W."/>
            <person name="Miner T."/>
            <person name="Minx P."/>
            <person name="Delehaunty K."/>
            <person name="Fronick C."/>
            <person name="Magrini V."/>
            <person name="Nhan M."/>
            <person name="Warren W."/>
            <person name="Florea L."/>
            <person name="Spieth J."/>
            <person name="Wilson R.K."/>
        </authorList>
    </citation>
    <scope>NUCLEOTIDE SEQUENCE [LARGE SCALE GENOMIC DNA]</scope>
    <source>
        <strain>ATCC 9150 / SARB42</strain>
    </source>
</reference>